<organism>
    <name type="scientific">Staphylococcus aureus (strain MW2)</name>
    <dbReference type="NCBI Taxonomy" id="196620"/>
    <lineage>
        <taxon>Bacteria</taxon>
        <taxon>Bacillati</taxon>
        <taxon>Bacillota</taxon>
        <taxon>Bacilli</taxon>
        <taxon>Bacillales</taxon>
        <taxon>Staphylococcaceae</taxon>
        <taxon>Staphylococcus</taxon>
    </lineage>
</organism>
<protein>
    <recommendedName>
        <fullName evidence="1">3-isopropylmalate dehydratase large subunit</fullName>
        <ecNumber evidence="1">4.2.1.33</ecNumber>
    </recommendedName>
    <alternativeName>
        <fullName evidence="1">Alpha-IPM isomerase</fullName>
        <shortName evidence="1">IPMI</shortName>
    </alternativeName>
    <alternativeName>
        <fullName evidence="1">Isopropylmalate isomerase</fullName>
    </alternativeName>
</protein>
<reference key="1">
    <citation type="journal article" date="2002" name="Lancet">
        <title>Genome and virulence determinants of high virulence community-acquired MRSA.</title>
        <authorList>
            <person name="Baba T."/>
            <person name="Takeuchi F."/>
            <person name="Kuroda M."/>
            <person name="Yuzawa H."/>
            <person name="Aoki K."/>
            <person name="Oguchi A."/>
            <person name="Nagai Y."/>
            <person name="Iwama N."/>
            <person name="Asano K."/>
            <person name="Naimi T."/>
            <person name="Kuroda H."/>
            <person name="Cui L."/>
            <person name="Yamamoto K."/>
            <person name="Hiramatsu K."/>
        </authorList>
    </citation>
    <scope>NUCLEOTIDE SEQUENCE [LARGE SCALE GENOMIC DNA]</scope>
    <source>
        <strain>MW2</strain>
    </source>
</reference>
<dbReference type="EC" id="4.2.1.33" evidence="1"/>
<dbReference type="EMBL" id="BA000033">
    <property type="protein sequence ID" value="BAB95848.1"/>
    <property type="molecule type" value="Genomic_DNA"/>
</dbReference>
<dbReference type="RefSeq" id="WP_000531834.1">
    <property type="nucleotide sequence ID" value="NC_003923.1"/>
</dbReference>
<dbReference type="SMR" id="P58947"/>
<dbReference type="KEGG" id="sam:MW1983"/>
<dbReference type="HOGENOM" id="CLU_006714_3_4_9"/>
<dbReference type="UniPathway" id="UPA00048">
    <property type="reaction ID" value="UER00071"/>
</dbReference>
<dbReference type="GO" id="GO:0003861">
    <property type="term" value="F:3-isopropylmalate dehydratase activity"/>
    <property type="evidence" value="ECO:0007669"/>
    <property type="project" value="UniProtKB-UniRule"/>
</dbReference>
<dbReference type="GO" id="GO:0051539">
    <property type="term" value="F:4 iron, 4 sulfur cluster binding"/>
    <property type="evidence" value="ECO:0007669"/>
    <property type="project" value="UniProtKB-KW"/>
</dbReference>
<dbReference type="GO" id="GO:0046872">
    <property type="term" value="F:metal ion binding"/>
    <property type="evidence" value="ECO:0007669"/>
    <property type="project" value="UniProtKB-KW"/>
</dbReference>
<dbReference type="GO" id="GO:0009098">
    <property type="term" value="P:L-leucine biosynthetic process"/>
    <property type="evidence" value="ECO:0007669"/>
    <property type="project" value="UniProtKB-UniRule"/>
</dbReference>
<dbReference type="CDD" id="cd01583">
    <property type="entry name" value="IPMI"/>
    <property type="match status" value="1"/>
</dbReference>
<dbReference type="Gene3D" id="3.30.499.10">
    <property type="entry name" value="Aconitase, domain 3"/>
    <property type="match status" value="2"/>
</dbReference>
<dbReference type="HAMAP" id="MF_01026">
    <property type="entry name" value="LeuC_type1"/>
    <property type="match status" value="1"/>
</dbReference>
<dbReference type="InterPro" id="IPR004430">
    <property type="entry name" value="3-IsopropMal_deHydase_lsu"/>
</dbReference>
<dbReference type="InterPro" id="IPR015931">
    <property type="entry name" value="Acnase/IPM_dHydase_lsu_aba_1/3"/>
</dbReference>
<dbReference type="InterPro" id="IPR001030">
    <property type="entry name" value="Acoase/IPM_deHydtase_lsu_aba"/>
</dbReference>
<dbReference type="InterPro" id="IPR018136">
    <property type="entry name" value="Aconitase_4Fe-4S_BS"/>
</dbReference>
<dbReference type="InterPro" id="IPR036008">
    <property type="entry name" value="Aconitase_4Fe-4S_dom"/>
</dbReference>
<dbReference type="InterPro" id="IPR050067">
    <property type="entry name" value="IPM_dehydratase_rel_enz"/>
</dbReference>
<dbReference type="InterPro" id="IPR033941">
    <property type="entry name" value="IPMI_cat"/>
</dbReference>
<dbReference type="NCBIfam" id="TIGR00170">
    <property type="entry name" value="leuC"/>
    <property type="match status" value="1"/>
</dbReference>
<dbReference type="NCBIfam" id="NF004016">
    <property type="entry name" value="PRK05478.1"/>
    <property type="match status" value="1"/>
</dbReference>
<dbReference type="NCBIfam" id="NF009116">
    <property type="entry name" value="PRK12466.1"/>
    <property type="match status" value="1"/>
</dbReference>
<dbReference type="PANTHER" id="PTHR43822:SF9">
    <property type="entry name" value="3-ISOPROPYLMALATE DEHYDRATASE"/>
    <property type="match status" value="1"/>
</dbReference>
<dbReference type="PANTHER" id="PTHR43822">
    <property type="entry name" value="HOMOACONITASE, MITOCHONDRIAL-RELATED"/>
    <property type="match status" value="1"/>
</dbReference>
<dbReference type="Pfam" id="PF00330">
    <property type="entry name" value="Aconitase"/>
    <property type="match status" value="1"/>
</dbReference>
<dbReference type="PRINTS" id="PR00415">
    <property type="entry name" value="ACONITASE"/>
</dbReference>
<dbReference type="SUPFAM" id="SSF53732">
    <property type="entry name" value="Aconitase iron-sulfur domain"/>
    <property type="match status" value="1"/>
</dbReference>
<dbReference type="PROSITE" id="PS00450">
    <property type="entry name" value="ACONITASE_1"/>
    <property type="match status" value="1"/>
</dbReference>
<dbReference type="PROSITE" id="PS01244">
    <property type="entry name" value="ACONITASE_2"/>
    <property type="match status" value="1"/>
</dbReference>
<accession>P58947</accession>
<gene>
    <name evidence="1" type="primary">leuC</name>
    <name type="ordered locus">MW1983</name>
</gene>
<evidence type="ECO:0000255" key="1">
    <source>
        <dbReference type="HAMAP-Rule" id="MF_01026"/>
    </source>
</evidence>
<comment type="function">
    <text evidence="1">Catalyzes the isomerization between 2-isopropylmalate and 3-isopropylmalate, via the formation of 2-isopropylmaleate.</text>
</comment>
<comment type="catalytic activity">
    <reaction evidence="1">
        <text>(2R,3S)-3-isopropylmalate = (2S)-2-isopropylmalate</text>
        <dbReference type="Rhea" id="RHEA:32287"/>
        <dbReference type="ChEBI" id="CHEBI:1178"/>
        <dbReference type="ChEBI" id="CHEBI:35121"/>
        <dbReference type="EC" id="4.2.1.33"/>
    </reaction>
</comment>
<comment type="cofactor">
    <cofactor evidence="1">
        <name>[4Fe-4S] cluster</name>
        <dbReference type="ChEBI" id="CHEBI:49883"/>
    </cofactor>
    <text evidence="1">Binds 1 [4Fe-4S] cluster per subunit.</text>
</comment>
<comment type="pathway">
    <text evidence="1">Amino-acid biosynthesis; L-leucine biosynthesis; L-leucine from 3-methyl-2-oxobutanoate: step 2/4.</text>
</comment>
<comment type="subunit">
    <text evidence="1">Heterodimer of LeuC and LeuD.</text>
</comment>
<comment type="similarity">
    <text evidence="1">Belongs to the aconitase/IPM isomerase family. LeuC type 1 subfamily.</text>
</comment>
<keyword id="KW-0004">4Fe-4S</keyword>
<keyword id="KW-0028">Amino-acid biosynthesis</keyword>
<keyword id="KW-0100">Branched-chain amino acid biosynthesis</keyword>
<keyword id="KW-0408">Iron</keyword>
<keyword id="KW-0411">Iron-sulfur</keyword>
<keyword id="KW-0432">Leucine biosynthesis</keyword>
<keyword id="KW-0456">Lyase</keyword>
<keyword id="KW-0479">Metal-binding</keyword>
<proteinExistence type="inferred from homology"/>
<feature type="chain" id="PRO_0000076815" description="3-isopropylmalate dehydratase large subunit">
    <location>
        <begin position="1"/>
        <end position="456"/>
    </location>
</feature>
<feature type="binding site" evidence="1">
    <location>
        <position position="336"/>
    </location>
    <ligand>
        <name>[4Fe-4S] cluster</name>
        <dbReference type="ChEBI" id="CHEBI:49883"/>
    </ligand>
</feature>
<feature type="binding site" evidence="1">
    <location>
        <position position="396"/>
    </location>
    <ligand>
        <name>[4Fe-4S] cluster</name>
        <dbReference type="ChEBI" id="CHEBI:49883"/>
    </ligand>
</feature>
<feature type="binding site" evidence="1">
    <location>
        <position position="399"/>
    </location>
    <ligand>
        <name>[4Fe-4S] cluster</name>
        <dbReference type="ChEBI" id="CHEBI:49883"/>
    </ligand>
</feature>
<name>LEUC_STAAW</name>
<sequence>MGQTLFDKVWNRHVLYGKLGEPQLLYIDLHLIHEVTSPQAFEGLRLQNRKLRRPDLTFATLDHNVPTIDIFNIKDEIANKQITTLQKNAIDFGVHIFDMGSDEQGIVHMVGPETGLTQPGKTIVCGDSHTATHGAFGAIAFGIGTSEVEHVFATQTLWQTKPKNLKIDINGTLPTGVYAKDIILHLIKTYGVDFGTGYALEFTGETIKNLSMDGRMTICNMAIEGGAKYGIIQPDDITFEYVKGRPFADNFVKSVDKWRELYSDDDAIFDRVIELDVSTLEPQVTWGTNPEMGVNFSEPFPEISDINDQRAYDYMGLEPGQKAEDIDLGYVFLGSCTNARLSDLIEASHIVKGNKVHPNITAIVVPGSRTVKKEAEKLGLDTIFKNAGFEWREPGCSMCLGMNPDQVPEGVHCASTSNRNFEGRQGKGARTHLVSPAMAAAAAIHGKFVDVRKVVV</sequence>